<reference key="1">
    <citation type="journal article" date="2004" name="Proc. Natl. Acad. Sci. U.S.A.">
        <title>Insights into the evolution of Yersinia pestis through whole-genome comparison with Yersinia pseudotuberculosis.</title>
        <authorList>
            <person name="Chain P.S.G."/>
            <person name="Carniel E."/>
            <person name="Larimer F.W."/>
            <person name="Lamerdin J."/>
            <person name="Stoutland P.O."/>
            <person name="Regala W.M."/>
            <person name="Georgescu A.M."/>
            <person name="Vergez L.M."/>
            <person name="Land M.L."/>
            <person name="Motin V.L."/>
            <person name="Brubaker R.R."/>
            <person name="Fowler J."/>
            <person name="Hinnebusch J."/>
            <person name="Marceau M."/>
            <person name="Medigue C."/>
            <person name="Simonet M."/>
            <person name="Chenal-Francisque V."/>
            <person name="Souza B."/>
            <person name="Dacheux D."/>
            <person name="Elliott J.M."/>
            <person name="Derbise A."/>
            <person name="Hauser L.J."/>
            <person name="Garcia E."/>
        </authorList>
    </citation>
    <scope>NUCLEOTIDE SEQUENCE [LARGE SCALE GENOMIC DNA]</scope>
    <source>
        <strain>IP32953</strain>
    </source>
</reference>
<organism>
    <name type="scientific">Yersinia pseudotuberculosis serotype I (strain IP32953)</name>
    <dbReference type="NCBI Taxonomy" id="273123"/>
    <lineage>
        <taxon>Bacteria</taxon>
        <taxon>Pseudomonadati</taxon>
        <taxon>Pseudomonadota</taxon>
        <taxon>Gammaproteobacteria</taxon>
        <taxon>Enterobacterales</taxon>
        <taxon>Yersiniaceae</taxon>
        <taxon>Yersinia</taxon>
    </lineage>
</organism>
<gene>
    <name evidence="1" type="primary">clsA</name>
    <name type="synonym">cls</name>
    <name type="ordered locus">YPTB2111</name>
</gene>
<keyword id="KW-0997">Cell inner membrane</keyword>
<keyword id="KW-1003">Cell membrane</keyword>
<keyword id="KW-0444">Lipid biosynthesis</keyword>
<keyword id="KW-0443">Lipid metabolism</keyword>
<keyword id="KW-0472">Membrane</keyword>
<keyword id="KW-0594">Phospholipid biosynthesis</keyword>
<keyword id="KW-1208">Phospholipid metabolism</keyword>
<keyword id="KW-0677">Repeat</keyword>
<keyword id="KW-0808">Transferase</keyword>
<keyword id="KW-0812">Transmembrane</keyword>
<keyword id="KW-1133">Transmembrane helix</keyword>
<accession>Q66AL9</accession>
<feature type="chain" id="PRO_1000058500" description="Cardiolipin synthase A">
    <location>
        <begin position="1"/>
        <end position="486"/>
    </location>
</feature>
<feature type="transmembrane region" description="Helical" evidence="1">
    <location>
        <begin position="3"/>
        <end position="23"/>
    </location>
</feature>
<feature type="transmembrane region" description="Helical" evidence="1">
    <location>
        <begin position="38"/>
        <end position="58"/>
    </location>
</feature>
<feature type="domain" description="PLD phosphodiesterase 1" evidence="1">
    <location>
        <begin position="219"/>
        <end position="246"/>
    </location>
</feature>
<feature type="domain" description="PLD phosphodiesterase 2" evidence="1">
    <location>
        <begin position="399"/>
        <end position="426"/>
    </location>
</feature>
<feature type="active site" evidence="1">
    <location>
        <position position="224"/>
    </location>
</feature>
<feature type="active site" evidence="1">
    <location>
        <position position="226"/>
    </location>
</feature>
<feature type="active site" evidence="1">
    <location>
        <position position="231"/>
    </location>
</feature>
<feature type="active site" evidence="1">
    <location>
        <position position="404"/>
    </location>
</feature>
<feature type="active site" evidence="1">
    <location>
        <position position="406"/>
    </location>
</feature>
<feature type="active site" evidence="1">
    <location>
        <position position="411"/>
    </location>
</feature>
<name>CLSA_YERPS</name>
<sequence>MTTFYTVISWLSVFGYWLLIAGVTLRILMKRRAVPSAMAWLLIIYILPLVGIIAYLSFGELHLGKRRAERAKAMWPSTARWLSELKECQHIFANSNSEVATPLFQLCERRQGINGVKGNQLQLLTTTDDTLKALVRDIELARHNIEMVFYIWQPGGLVDQVAESLMAAARRGVHCRLLLDSAGSKQFFRSPYPAMMRNAGIEVVEALKVNVFRMFLRRMDLRQHRKIVLIDNYVAYTGSMNMVDPRFFKQDAGVGQWIDMMARMEGPVATTLGIVYACDWEIETGKRILPPPPDANIMPFEEETGHTIQVIASGPGFPEEMIHQALLTAVYAAREQLIMTTPYFVPSDDLLHAICTAAQRGVDVSIIVPRENDSMMVRWASRAFFTELLNAGVKIYQFEGGLLHSKSVLVDGQLSLVGTVNLDMRSLWLNFEITLVIDDDGFGADLAQVQDDYIARSALLDGERWNKRPLWHRVTERLFYFFSPLL</sequence>
<proteinExistence type="inferred from homology"/>
<dbReference type="EC" id="2.7.8.-" evidence="1"/>
<dbReference type="EMBL" id="BX936398">
    <property type="protein sequence ID" value="CAH21349.1"/>
    <property type="molecule type" value="Genomic_DNA"/>
</dbReference>
<dbReference type="RefSeq" id="WP_011192437.1">
    <property type="nucleotide sequence ID" value="NC_006155.1"/>
</dbReference>
<dbReference type="SMR" id="Q66AL9"/>
<dbReference type="KEGG" id="ypo:BZ17_350"/>
<dbReference type="KEGG" id="yps:YPTB2111"/>
<dbReference type="PATRIC" id="fig|273123.14.peg.373"/>
<dbReference type="Proteomes" id="UP000001011">
    <property type="component" value="Chromosome"/>
</dbReference>
<dbReference type="GO" id="GO:0005886">
    <property type="term" value="C:plasma membrane"/>
    <property type="evidence" value="ECO:0007669"/>
    <property type="project" value="UniProtKB-SubCell"/>
</dbReference>
<dbReference type="GO" id="GO:0008808">
    <property type="term" value="F:cardiolipin synthase activity"/>
    <property type="evidence" value="ECO:0007669"/>
    <property type="project" value="InterPro"/>
</dbReference>
<dbReference type="GO" id="GO:0032049">
    <property type="term" value="P:cardiolipin biosynthetic process"/>
    <property type="evidence" value="ECO:0007669"/>
    <property type="project" value="InterPro"/>
</dbReference>
<dbReference type="CDD" id="cd09152">
    <property type="entry name" value="PLDc_EcCLS_like_1"/>
    <property type="match status" value="1"/>
</dbReference>
<dbReference type="CDD" id="cd09158">
    <property type="entry name" value="PLDc_EcCLS_like_2"/>
    <property type="match status" value="1"/>
</dbReference>
<dbReference type="FunFam" id="3.30.870.10:FF:000002">
    <property type="entry name" value="Cardiolipin synthase A"/>
    <property type="match status" value="1"/>
</dbReference>
<dbReference type="FunFam" id="3.30.870.10:FF:000003">
    <property type="entry name" value="Cardiolipin synthase A"/>
    <property type="match status" value="1"/>
</dbReference>
<dbReference type="Gene3D" id="3.30.870.10">
    <property type="entry name" value="Endonuclease Chain A"/>
    <property type="match status" value="2"/>
</dbReference>
<dbReference type="HAMAP" id="MF_00190">
    <property type="entry name" value="Cardiolipin_synth_ClsA"/>
    <property type="match status" value="1"/>
</dbReference>
<dbReference type="InterPro" id="IPR022924">
    <property type="entry name" value="Cardiolipin_synthase"/>
</dbReference>
<dbReference type="InterPro" id="IPR030840">
    <property type="entry name" value="CL_synthase_A"/>
</dbReference>
<dbReference type="InterPro" id="IPR027379">
    <property type="entry name" value="CLS_N"/>
</dbReference>
<dbReference type="InterPro" id="IPR025202">
    <property type="entry name" value="PLD-like_dom"/>
</dbReference>
<dbReference type="InterPro" id="IPR001736">
    <property type="entry name" value="PLipase_D/transphosphatidylase"/>
</dbReference>
<dbReference type="NCBIfam" id="TIGR04265">
    <property type="entry name" value="bac_cardiolipin"/>
    <property type="match status" value="1"/>
</dbReference>
<dbReference type="PANTHER" id="PTHR21248">
    <property type="entry name" value="CARDIOLIPIN SYNTHASE"/>
    <property type="match status" value="1"/>
</dbReference>
<dbReference type="PANTHER" id="PTHR21248:SF22">
    <property type="entry name" value="PHOSPHOLIPASE D"/>
    <property type="match status" value="1"/>
</dbReference>
<dbReference type="Pfam" id="PF13091">
    <property type="entry name" value="PLDc_2"/>
    <property type="match status" value="2"/>
</dbReference>
<dbReference type="Pfam" id="PF13396">
    <property type="entry name" value="PLDc_N"/>
    <property type="match status" value="1"/>
</dbReference>
<dbReference type="SMART" id="SM00155">
    <property type="entry name" value="PLDc"/>
    <property type="match status" value="2"/>
</dbReference>
<dbReference type="SUPFAM" id="SSF56024">
    <property type="entry name" value="Phospholipase D/nuclease"/>
    <property type="match status" value="2"/>
</dbReference>
<dbReference type="PROSITE" id="PS50035">
    <property type="entry name" value="PLD"/>
    <property type="match status" value="2"/>
</dbReference>
<comment type="function">
    <text evidence="1">Catalyzes the reversible phosphatidyl group transfer from one phosphatidylglycerol molecule to another to form cardiolipin (CL) (diphosphatidylglycerol) and glycerol.</text>
</comment>
<comment type="catalytic activity">
    <reaction evidence="1">
        <text>2 a 1,2-diacyl-sn-glycero-3-phospho-(1'-sn-glycerol) = a cardiolipin + glycerol</text>
        <dbReference type="Rhea" id="RHEA:31451"/>
        <dbReference type="ChEBI" id="CHEBI:17754"/>
        <dbReference type="ChEBI" id="CHEBI:62237"/>
        <dbReference type="ChEBI" id="CHEBI:64716"/>
    </reaction>
</comment>
<comment type="subcellular location">
    <subcellularLocation>
        <location evidence="1">Cell inner membrane</location>
        <topology evidence="1">Multi-pass membrane protein</topology>
    </subcellularLocation>
</comment>
<comment type="similarity">
    <text evidence="1">Belongs to the phospholipase D family. Cardiolipin synthase subfamily. ClsA sub-subfamily.</text>
</comment>
<evidence type="ECO:0000255" key="1">
    <source>
        <dbReference type="HAMAP-Rule" id="MF_00190"/>
    </source>
</evidence>
<protein>
    <recommendedName>
        <fullName evidence="1">Cardiolipin synthase A</fullName>
        <shortName evidence="1">CL synthase</shortName>
        <ecNumber evidence="1">2.7.8.-</ecNumber>
    </recommendedName>
</protein>